<comment type="function">
    <text evidence="1">Catalyzes the reversible oxidation of malate to oxaloacetate.</text>
</comment>
<comment type="catalytic activity">
    <reaction evidence="1">
        <text>(S)-malate + NAD(+) = oxaloacetate + NADH + H(+)</text>
        <dbReference type="Rhea" id="RHEA:21432"/>
        <dbReference type="ChEBI" id="CHEBI:15378"/>
        <dbReference type="ChEBI" id="CHEBI:15589"/>
        <dbReference type="ChEBI" id="CHEBI:16452"/>
        <dbReference type="ChEBI" id="CHEBI:57540"/>
        <dbReference type="ChEBI" id="CHEBI:57945"/>
        <dbReference type="EC" id="1.1.1.37"/>
    </reaction>
</comment>
<comment type="subunit">
    <text evidence="1">Homodimer.</text>
</comment>
<comment type="similarity">
    <text evidence="1">Belongs to the LDH/MDH superfamily. MDH type 1 family.</text>
</comment>
<keyword id="KW-0520">NAD</keyword>
<keyword id="KW-0560">Oxidoreductase</keyword>
<keyword id="KW-0816">Tricarboxylic acid cycle</keyword>
<dbReference type="EC" id="1.1.1.37" evidence="1"/>
<dbReference type="EMBL" id="CP000266">
    <property type="protein sequence ID" value="ABF05313.1"/>
    <property type="molecule type" value="Genomic_DNA"/>
</dbReference>
<dbReference type="RefSeq" id="WP_005050705.1">
    <property type="nucleotide sequence ID" value="NC_008258.1"/>
</dbReference>
<dbReference type="SMR" id="Q0T052"/>
<dbReference type="KEGG" id="sfv:SFV_3263"/>
<dbReference type="HOGENOM" id="CLU_047181_0_1_6"/>
<dbReference type="Proteomes" id="UP000000659">
    <property type="component" value="Chromosome"/>
</dbReference>
<dbReference type="GO" id="GO:0005737">
    <property type="term" value="C:cytoplasm"/>
    <property type="evidence" value="ECO:0007669"/>
    <property type="project" value="TreeGrafter"/>
</dbReference>
<dbReference type="GO" id="GO:0030060">
    <property type="term" value="F:L-malate dehydrogenase (NAD+) activity"/>
    <property type="evidence" value="ECO:0007669"/>
    <property type="project" value="UniProtKB-UniRule"/>
</dbReference>
<dbReference type="GO" id="GO:0006108">
    <property type="term" value="P:malate metabolic process"/>
    <property type="evidence" value="ECO:0007669"/>
    <property type="project" value="InterPro"/>
</dbReference>
<dbReference type="GO" id="GO:0006099">
    <property type="term" value="P:tricarboxylic acid cycle"/>
    <property type="evidence" value="ECO:0007669"/>
    <property type="project" value="UniProtKB-UniRule"/>
</dbReference>
<dbReference type="CDD" id="cd01337">
    <property type="entry name" value="MDH_glyoxysomal_mitochondrial"/>
    <property type="match status" value="1"/>
</dbReference>
<dbReference type="FunFam" id="3.40.50.720:FF:000017">
    <property type="entry name" value="Malate dehydrogenase"/>
    <property type="match status" value="1"/>
</dbReference>
<dbReference type="FunFam" id="3.90.110.10:FF:000001">
    <property type="entry name" value="Malate dehydrogenase"/>
    <property type="match status" value="1"/>
</dbReference>
<dbReference type="Gene3D" id="3.90.110.10">
    <property type="entry name" value="Lactate dehydrogenase/glycoside hydrolase, family 4, C-terminal"/>
    <property type="match status" value="1"/>
</dbReference>
<dbReference type="Gene3D" id="3.40.50.720">
    <property type="entry name" value="NAD(P)-binding Rossmann-like Domain"/>
    <property type="match status" value="1"/>
</dbReference>
<dbReference type="HAMAP" id="MF_01516">
    <property type="entry name" value="Malate_dehydrog_1"/>
    <property type="match status" value="1"/>
</dbReference>
<dbReference type="InterPro" id="IPR001557">
    <property type="entry name" value="L-lactate/malate_DH"/>
</dbReference>
<dbReference type="InterPro" id="IPR022383">
    <property type="entry name" value="Lactate/malate_DH_C"/>
</dbReference>
<dbReference type="InterPro" id="IPR001236">
    <property type="entry name" value="Lactate/malate_DH_N"/>
</dbReference>
<dbReference type="InterPro" id="IPR015955">
    <property type="entry name" value="Lactate_DH/Glyco_Ohase_4_C"/>
</dbReference>
<dbReference type="InterPro" id="IPR001252">
    <property type="entry name" value="Malate_DH_AS"/>
</dbReference>
<dbReference type="InterPro" id="IPR010097">
    <property type="entry name" value="Malate_DH_type1"/>
</dbReference>
<dbReference type="InterPro" id="IPR023958">
    <property type="entry name" value="Malate_DH_type1_bac"/>
</dbReference>
<dbReference type="InterPro" id="IPR036291">
    <property type="entry name" value="NAD(P)-bd_dom_sf"/>
</dbReference>
<dbReference type="NCBIfam" id="TIGR01772">
    <property type="entry name" value="MDH_euk_gproteo"/>
    <property type="match status" value="1"/>
</dbReference>
<dbReference type="PANTHER" id="PTHR11540">
    <property type="entry name" value="MALATE AND LACTATE DEHYDROGENASE"/>
    <property type="match status" value="1"/>
</dbReference>
<dbReference type="PANTHER" id="PTHR11540:SF16">
    <property type="entry name" value="MALATE DEHYDROGENASE, MITOCHONDRIAL"/>
    <property type="match status" value="1"/>
</dbReference>
<dbReference type="Pfam" id="PF02866">
    <property type="entry name" value="Ldh_1_C"/>
    <property type="match status" value="1"/>
</dbReference>
<dbReference type="Pfam" id="PF00056">
    <property type="entry name" value="Ldh_1_N"/>
    <property type="match status" value="1"/>
</dbReference>
<dbReference type="PIRSF" id="PIRSF000102">
    <property type="entry name" value="Lac_mal_DH"/>
    <property type="match status" value="1"/>
</dbReference>
<dbReference type="SUPFAM" id="SSF56327">
    <property type="entry name" value="LDH C-terminal domain-like"/>
    <property type="match status" value="1"/>
</dbReference>
<dbReference type="SUPFAM" id="SSF51735">
    <property type="entry name" value="NAD(P)-binding Rossmann-fold domains"/>
    <property type="match status" value="1"/>
</dbReference>
<dbReference type="PROSITE" id="PS00068">
    <property type="entry name" value="MDH"/>
    <property type="match status" value="1"/>
</dbReference>
<proteinExistence type="inferred from homology"/>
<feature type="chain" id="PRO_0000294310" description="Malate dehydrogenase">
    <location>
        <begin position="1"/>
        <end position="312"/>
    </location>
</feature>
<feature type="active site" description="Proton acceptor" evidence="1">
    <location>
        <position position="177"/>
    </location>
</feature>
<feature type="binding site" evidence="1">
    <location>
        <begin position="7"/>
        <end position="13"/>
    </location>
    <ligand>
        <name>NAD(+)</name>
        <dbReference type="ChEBI" id="CHEBI:57540"/>
    </ligand>
</feature>
<feature type="binding site" evidence="1">
    <location>
        <position position="34"/>
    </location>
    <ligand>
        <name>NAD(+)</name>
        <dbReference type="ChEBI" id="CHEBI:57540"/>
    </ligand>
</feature>
<feature type="binding site" evidence="1">
    <location>
        <position position="81"/>
    </location>
    <ligand>
        <name>substrate</name>
    </ligand>
</feature>
<feature type="binding site" evidence="1">
    <location>
        <position position="87"/>
    </location>
    <ligand>
        <name>substrate</name>
    </ligand>
</feature>
<feature type="binding site" evidence="1">
    <location>
        <position position="94"/>
    </location>
    <ligand>
        <name>NAD(+)</name>
        <dbReference type="ChEBI" id="CHEBI:57540"/>
    </ligand>
</feature>
<feature type="binding site" evidence="1">
    <location>
        <begin position="117"/>
        <end position="119"/>
    </location>
    <ligand>
        <name>NAD(+)</name>
        <dbReference type="ChEBI" id="CHEBI:57540"/>
    </ligand>
</feature>
<feature type="binding site" evidence="1">
    <location>
        <position position="119"/>
    </location>
    <ligand>
        <name>substrate</name>
    </ligand>
</feature>
<feature type="binding site" evidence="1">
    <location>
        <position position="153"/>
    </location>
    <ligand>
        <name>substrate</name>
    </ligand>
</feature>
<feature type="binding site" evidence="1">
    <location>
        <position position="227"/>
    </location>
    <ligand>
        <name>NAD(+)</name>
        <dbReference type="ChEBI" id="CHEBI:57540"/>
    </ligand>
</feature>
<protein>
    <recommendedName>
        <fullName evidence="1">Malate dehydrogenase</fullName>
        <ecNumber evidence="1">1.1.1.37</ecNumber>
    </recommendedName>
</protein>
<name>MDH_SHIF8</name>
<reference key="1">
    <citation type="journal article" date="2006" name="BMC Genomics">
        <title>Complete genome sequence of Shigella flexneri 5b and comparison with Shigella flexneri 2a.</title>
        <authorList>
            <person name="Nie H."/>
            <person name="Yang F."/>
            <person name="Zhang X."/>
            <person name="Yang J."/>
            <person name="Chen L."/>
            <person name="Wang J."/>
            <person name="Xiong Z."/>
            <person name="Peng J."/>
            <person name="Sun L."/>
            <person name="Dong J."/>
            <person name="Xue Y."/>
            <person name="Xu X."/>
            <person name="Chen S."/>
            <person name="Yao Z."/>
            <person name="Shen Y."/>
            <person name="Jin Q."/>
        </authorList>
    </citation>
    <scope>NUCLEOTIDE SEQUENCE [LARGE SCALE GENOMIC DNA]</scope>
    <source>
        <strain>8401</strain>
    </source>
</reference>
<organism>
    <name type="scientific">Shigella flexneri serotype 5b (strain 8401)</name>
    <dbReference type="NCBI Taxonomy" id="373384"/>
    <lineage>
        <taxon>Bacteria</taxon>
        <taxon>Pseudomonadati</taxon>
        <taxon>Pseudomonadota</taxon>
        <taxon>Gammaproteobacteria</taxon>
        <taxon>Enterobacterales</taxon>
        <taxon>Enterobacteriaceae</taxon>
        <taxon>Shigella</taxon>
    </lineage>
</organism>
<evidence type="ECO:0000255" key="1">
    <source>
        <dbReference type="HAMAP-Rule" id="MF_01516"/>
    </source>
</evidence>
<gene>
    <name evidence="1" type="primary">mdh</name>
    <name type="ordered locus">SFV_3263</name>
</gene>
<sequence>MKVAVLGAAGGIGQALALLLKTQLPSGSELSLYDIAPVTPGVAVDLSHIPTAVKIKGFSGEDATPALEGADVVLISAGVARKPGMDRSDLFNVNAGIVKNLVQQVAKNCPKACIGIITNPVNTTVAIAAEVLKKAGVYDKNKLFGVTTLDIIRSNTFVAELKGKQPGEVEVPVIGGHSGVTILPLLSQVPGVSFTEQEVADLTKRIQNAGTEVVEAKAGGGSATLSMGQAAARFGLSLVRALQGEQGVVECAYVEGDGQYARFFSQPLLLGKNGVEERKSIGTLSAFEQNALEGMLDTLKKDIALGKEFVNK</sequence>
<accession>Q0T052</accession>